<reference key="1">
    <citation type="submission" date="2007-05" db="EMBL/GenBank/DDBJ databases">
        <title>Complete sequence of chromosome of Acidiphilium cryptum JF-5.</title>
        <authorList>
            <consortium name="US DOE Joint Genome Institute"/>
            <person name="Copeland A."/>
            <person name="Lucas S."/>
            <person name="Lapidus A."/>
            <person name="Barry K."/>
            <person name="Detter J.C."/>
            <person name="Glavina del Rio T."/>
            <person name="Hammon N."/>
            <person name="Israni S."/>
            <person name="Dalin E."/>
            <person name="Tice H."/>
            <person name="Pitluck S."/>
            <person name="Sims D."/>
            <person name="Brettin T."/>
            <person name="Bruce D."/>
            <person name="Han C."/>
            <person name="Schmutz J."/>
            <person name="Larimer F."/>
            <person name="Land M."/>
            <person name="Hauser L."/>
            <person name="Kyrpides N."/>
            <person name="Kim E."/>
            <person name="Magnuson T."/>
            <person name="Richardson P."/>
        </authorList>
    </citation>
    <scope>NUCLEOTIDE SEQUENCE [LARGE SCALE GENOMIC DNA]</scope>
    <source>
        <strain>JF-5</strain>
    </source>
</reference>
<feature type="chain" id="PRO_0000411058" description="Ribonuclease D">
    <location>
        <begin position="1"/>
        <end position="392"/>
    </location>
</feature>
<feature type="domain" description="3'-5' exonuclease" evidence="1">
    <location>
        <begin position="12"/>
        <end position="178"/>
    </location>
</feature>
<feature type="domain" description="HRDC" evidence="1">
    <location>
        <begin position="217"/>
        <end position="298"/>
    </location>
</feature>
<organism>
    <name type="scientific">Acidiphilium cryptum (strain JF-5)</name>
    <dbReference type="NCBI Taxonomy" id="349163"/>
    <lineage>
        <taxon>Bacteria</taxon>
        <taxon>Pseudomonadati</taxon>
        <taxon>Pseudomonadota</taxon>
        <taxon>Alphaproteobacteria</taxon>
        <taxon>Acetobacterales</taxon>
        <taxon>Acidocellaceae</taxon>
        <taxon>Acidiphilium</taxon>
    </lineage>
</organism>
<accession>A5G127</accession>
<protein>
    <recommendedName>
        <fullName evidence="1">Ribonuclease D</fullName>
        <shortName evidence="1">RNase D</shortName>
        <ecNumber evidence="1">3.1.13.5</ecNumber>
    </recommendedName>
</protein>
<comment type="function">
    <text evidence="1">Exonuclease involved in the 3' processing of various precursor tRNAs. Initiates hydrolysis at the 3'-terminus of an RNA molecule and releases 5'-mononucleotides.</text>
</comment>
<comment type="catalytic activity">
    <reaction evidence="1">
        <text>Exonucleolytic cleavage that removes extra residues from the 3'-terminus of tRNA to produce 5'-mononucleotides.</text>
        <dbReference type="EC" id="3.1.13.5"/>
    </reaction>
</comment>
<comment type="cofactor">
    <cofactor evidence="1">
        <name>a divalent metal cation</name>
        <dbReference type="ChEBI" id="CHEBI:60240"/>
    </cofactor>
</comment>
<comment type="subcellular location">
    <subcellularLocation>
        <location evidence="1">Cytoplasm</location>
    </subcellularLocation>
</comment>
<comment type="similarity">
    <text evidence="1">Belongs to the RNase D family.</text>
</comment>
<keyword id="KW-0963">Cytoplasm</keyword>
<keyword id="KW-0269">Exonuclease</keyword>
<keyword id="KW-0378">Hydrolase</keyword>
<keyword id="KW-0540">Nuclease</keyword>
<keyword id="KW-1185">Reference proteome</keyword>
<keyword id="KW-0819">tRNA processing</keyword>
<sequence>MKPSPSFPEPVLIETTEALAALCDRLAAEPFVTVDTEFMREKTYFPELCVVQLGGANDVAVIDAQAEGLDLAPLGALFANPAVTKVFHACRQDIEIFLLKFGAVPAPLFDTQVAAMVAGFGDQVGYDTLVSSLAGGRIDKAHRFSDWSARPLSRAQIAYAAADVTWLRPVYEGLRARLTREGRLDWVAEEAAVLADPATYRTEPEDAWRRLKLRGGNRRQLALVKAIAAWREREAMRVNVPRQRIVRDEQIPELAALAPADAEGLTRVRGISSGFAGGKSGRALLEVIASTKAIPDAELPEAPRAPESARPPAGLVALLKVLLAERAGANHVAARLIASAEDIDRLASEDAPNLPCLQGWRAELFGNDALRLKGGRIALAARGRRVEVVDLP</sequence>
<dbReference type="EC" id="3.1.13.5" evidence="1"/>
<dbReference type="EMBL" id="CP000697">
    <property type="protein sequence ID" value="ABQ31559.1"/>
    <property type="molecule type" value="Genomic_DNA"/>
</dbReference>
<dbReference type="RefSeq" id="WP_012040004.1">
    <property type="nucleotide sequence ID" value="NC_009484.1"/>
</dbReference>
<dbReference type="SMR" id="A5G127"/>
<dbReference type="STRING" id="349163.Acry_2365"/>
<dbReference type="KEGG" id="acr:Acry_2365"/>
<dbReference type="eggNOG" id="COG0349">
    <property type="taxonomic scope" value="Bacteria"/>
</dbReference>
<dbReference type="HOGENOM" id="CLU_042387_0_0_5"/>
<dbReference type="Proteomes" id="UP000000245">
    <property type="component" value="Chromosome"/>
</dbReference>
<dbReference type="GO" id="GO:0005737">
    <property type="term" value="C:cytoplasm"/>
    <property type="evidence" value="ECO:0007669"/>
    <property type="project" value="UniProtKB-SubCell"/>
</dbReference>
<dbReference type="GO" id="GO:0008408">
    <property type="term" value="F:3'-5' exonuclease activity"/>
    <property type="evidence" value="ECO:0007669"/>
    <property type="project" value="InterPro"/>
</dbReference>
<dbReference type="GO" id="GO:0003676">
    <property type="term" value="F:nucleic acid binding"/>
    <property type="evidence" value="ECO:0007669"/>
    <property type="project" value="InterPro"/>
</dbReference>
<dbReference type="GO" id="GO:0000166">
    <property type="term" value="F:nucleotide binding"/>
    <property type="evidence" value="ECO:0007669"/>
    <property type="project" value="InterPro"/>
</dbReference>
<dbReference type="GO" id="GO:0033890">
    <property type="term" value="F:ribonuclease D activity"/>
    <property type="evidence" value="ECO:0007669"/>
    <property type="project" value="UniProtKB-UniRule"/>
</dbReference>
<dbReference type="GO" id="GO:0042780">
    <property type="term" value="P:tRNA 3'-end processing"/>
    <property type="evidence" value="ECO:0007669"/>
    <property type="project" value="UniProtKB-UniRule"/>
</dbReference>
<dbReference type="CDD" id="cd06142">
    <property type="entry name" value="RNaseD_exo"/>
    <property type="match status" value="1"/>
</dbReference>
<dbReference type="Gene3D" id="1.10.150.80">
    <property type="entry name" value="HRDC domain"/>
    <property type="match status" value="1"/>
</dbReference>
<dbReference type="Gene3D" id="3.30.420.10">
    <property type="entry name" value="Ribonuclease H-like superfamily/Ribonuclease H"/>
    <property type="match status" value="1"/>
</dbReference>
<dbReference type="HAMAP" id="MF_01899">
    <property type="entry name" value="RNase_D"/>
    <property type="match status" value="1"/>
</dbReference>
<dbReference type="InterPro" id="IPR002562">
    <property type="entry name" value="3'-5'_exonuclease_dom"/>
</dbReference>
<dbReference type="InterPro" id="IPR010997">
    <property type="entry name" value="HRDC-like_sf"/>
</dbReference>
<dbReference type="InterPro" id="IPR002121">
    <property type="entry name" value="HRDC_dom"/>
</dbReference>
<dbReference type="InterPro" id="IPR044876">
    <property type="entry name" value="HRDC_dom_sf"/>
</dbReference>
<dbReference type="InterPro" id="IPR006292">
    <property type="entry name" value="RNase_D"/>
</dbReference>
<dbReference type="InterPro" id="IPR051086">
    <property type="entry name" value="RNase_D-like"/>
</dbReference>
<dbReference type="InterPro" id="IPR012337">
    <property type="entry name" value="RNaseH-like_sf"/>
</dbReference>
<dbReference type="InterPro" id="IPR036397">
    <property type="entry name" value="RNaseH_sf"/>
</dbReference>
<dbReference type="NCBIfam" id="TIGR01388">
    <property type="entry name" value="rnd"/>
    <property type="match status" value="1"/>
</dbReference>
<dbReference type="PANTHER" id="PTHR47649">
    <property type="entry name" value="RIBONUCLEASE D"/>
    <property type="match status" value="1"/>
</dbReference>
<dbReference type="PANTHER" id="PTHR47649:SF1">
    <property type="entry name" value="RIBONUCLEASE D"/>
    <property type="match status" value="1"/>
</dbReference>
<dbReference type="Pfam" id="PF01612">
    <property type="entry name" value="DNA_pol_A_exo1"/>
    <property type="match status" value="1"/>
</dbReference>
<dbReference type="Pfam" id="PF00570">
    <property type="entry name" value="HRDC"/>
    <property type="match status" value="1"/>
</dbReference>
<dbReference type="SMART" id="SM00474">
    <property type="entry name" value="35EXOc"/>
    <property type="match status" value="1"/>
</dbReference>
<dbReference type="SMART" id="SM00341">
    <property type="entry name" value="HRDC"/>
    <property type="match status" value="1"/>
</dbReference>
<dbReference type="SUPFAM" id="SSF47819">
    <property type="entry name" value="HRDC-like"/>
    <property type="match status" value="2"/>
</dbReference>
<dbReference type="SUPFAM" id="SSF53098">
    <property type="entry name" value="Ribonuclease H-like"/>
    <property type="match status" value="1"/>
</dbReference>
<dbReference type="PROSITE" id="PS50967">
    <property type="entry name" value="HRDC"/>
    <property type="match status" value="1"/>
</dbReference>
<gene>
    <name evidence="1" type="primary">rnd</name>
    <name type="ordered locus">Acry_2365</name>
</gene>
<name>RND_ACICJ</name>
<proteinExistence type="inferred from homology"/>
<evidence type="ECO:0000255" key="1">
    <source>
        <dbReference type="HAMAP-Rule" id="MF_01899"/>
    </source>
</evidence>